<gene>
    <name evidence="1" type="primary">glyA</name>
    <name type="ordered locus">Pro_0290</name>
</gene>
<comment type="function">
    <text evidence="1">Catalyzes the reversible interconversion of serine and glycine with tetrahydrofolate (THF) serving as the one-carbon carrier. This reaction serves as the major source of one-carbon groups required for the biosynthesis of purines, thymidylate, methionine, and other important biomolecules. Also exhibits THF-independent aldolase activity toward beta-hydroxyamino acids, producing glycine and aldehydes, via a retro-aldol mechanism.</text>
</comment>
<comment type="catalytic activity">
    <reaction evidence="1">
        <text>(6R)-5,10-methylene-5,6,7,8-tetrahydrofolate + glycine + H2O = (6S)-5,6,7,8-tetrahydrofolate + L-serine</text>
        <dbReference type="Rhea" id="RHEA:15481"/>
        <dbReference type="ChEBI" id="CHEBI:15377"/>
        <dbReference type="ChEBI" id="CHEBI:15636"/>
        <dbReference type="ChEBI" id="CHEBI:33384"/>
        <dbReference type="ChEBI" id="CHEBI:57305"/>
        <dbReference type="ChEBI" id="CHEBI:57453"/>
        <dbReference type="EC" id="2.1.2.1"/>
    </reaction>
</comment>
<comment type="cofactor">
    <cofactor evidence="1">
        <name>pyridoxal 5'-phosphate</name>
        <dbReference type="ChEBI" id="CHEBI:597326"/>
    </cofactor>
</comment>
<comment type="pathway">
    <text evidence="1">One-carbon metabolism; tetrahydrofolate interconversion.</text>
</comment>
<comment type="pathway">
    <text evidence="1">Amino-acid biosynthesis; glycine biosynthesis; glycine from L-serine: step 1/1.</text>
</comment>
<comment type="subunit">
    <text evidence="1">Homodimer.</text>
</comment>
<comment type="subcellular location">
    <subcellularLocation>
        <location evidence="1">Cytoplasm</location>
    </subcellularLocation>
</comment>
<comment type="similarity">
    <text evidence="1">Belongs to the SHMT family.</text>
</comment>
<evidence type="ECO:0000255" key="1">
    <source>
        <dbReference type="HAMAP-Rule" id="MF_00051"/>
    </source>
</evidence>
<keyword id="KW-0028">Amino-acid biosynthesis</keyword>
<keyword id="KW-0963">Cytoplasm</keyword>
<keyword id="KW-0554">One-carbon metabolism</keyword>
<keyword id="KW-0663">Pyridoxal phosphate</keyword>
<keyword id="KW-1185">Reference proteome</keyword>
<keyword id="KW-0808">Transferase</keyword>
<name>GLYA_PROMA</name>
<sequence length="419" mass="45949">MHTINSDLRNTDPDISFLINQELLRQQTHLELIASENFASEAVMEAQGSVLTNKYAEGLPNKRYYGGCEHIDAIEQLAITRAQTLFNAEWANVQPHSGAQANFAVFLALLNPGDTIMGMDLSHGGHLTHGSPVNVSGKWFNAIHYGVDQTTKVLNFEQIRQVALKNRPKLIICGFSAYPRTIDFKAFRSIADEIDAYLLADIAHIAGLVACGAHPNPVPYCDVVTTTTHKTLRGPRGGLILCRDKEFGKRFDKAVFPGNQGGPLEHVIAAKAVAFGEALKPEFKTYTFQVISNAKALAKRIQERGISIVSEGTDNHIVLLDLRSIEMTGKKADSLISEVNITANKNTVPFDPESPFVTSGLRLGTAALTTRGFTEKAFIEVADVIADCLLNPEDLSIKEQCKAKVIDLCNRFPLYNSNQ</sequence>
<feature type="chain" id="PRO_0000113634" description="Serine hydroxymethyltransferase">
    <location>
        <begin position="1"/>
        <end position="419"/>
    </location>
</feature>
<feature type="binding site" evidence="1">
    <location>
        <position position="121"/>
    </location>
    <ligand>
        <name>(6S)-5,6,7,8-tetrahydrofolate</name>
        <dbReference type="ChEBI" id="CHEBI:57453"/>
    </ligand>
</feature>
<feature type="binding site" evidence="1">
    <location>
        <begin position="125"/>
        <end position="127"/>
    </location>
    <ligand>
        <name>(6S)-5,6,7,8-tetrahydrofolate</name>
        <dbReference type="ChEBI" id="CHEBI:57453"/>
    </ligand>
</feature>
<feature type="binding site" evidence="1">
    <location>
        <begin position="354"/>
        <end position="356"/>
    </location>
    <ligand>
        <name>(6S)-5,6,7,8-tetrahydrofolate</name>
        <dbReference type="ChEBI" id="CHEBI:57453"/>
    </ligand>
</feature>
<feature type="site" description="Plays an important role in substrate specificity" evidence="1">
    <location>
        <position position="229"/>
    </location>
</feature>
<feature type="modified residue" description="N6-(pyridoxal phosphate)lysine" evidence="1">
    <location>
        <position position="230"/>
    </location>
</feature>
<dbReference type="EC" id="2.1.2.1" evidence="1"/>
<dbReference type="EMBL" id="AE017126">
    <property type="protein sequence ID" value="AAP99336.1"/>
    <property type="molecule type" value="Genomic_DNA"/>
</dbReference>
<dbReference type="RefSeq" id="NP_874684.1">
    <property type="nucleotide sequence ID" value="NC_005042.1"/>
</dbReference>
<dbReference type="RefSeq" id="WP_011124445.1">
    <property type="nucleotide sequence ID" value="NC_005042.1"/>
</dbReference>
<dbReference type="SMR" id="Q7VDS8"/>
<dbReference type="STRING" id="167539.Pro_0290"/>
<dbReference type="EnsemblBacteria" id="AAP99336">
    <property type="protein sequence ID" value="AAP99336"/>
    <property type="gene ID" value="Pro_0290"/>
</dbReference>
<dbReference type="KEGG" id="pma:Pro_0290"/>
<dbReference type="PATRIC" id="fig|167539.5.peg.297"/>
<dbReference type="eggNOG" id="COG0112">
    <property type="taxonomic scope" value="Bacteria"/>
</dbReference>
<dbReference type="HOGENOM" id="CLU_022477_2_1_3"/>
<dbReference type="OrthoDB" id="9803846at2"/>
<dbReference type="UniPathway" id="UPA00193"/>
<dbReference type="UniPathway" id="UPA00288">
    <property type="reaction ID" value="UER01023"/>
</dbReference>
<dbReference type="Proteomes" id="UP000001420">
    <property type="component" value="Chromosome"/>
</dbReference>
<dbReference type="GO" id="GO:0005829">
    <property type="term" value="C:cytosol"/>
    <property type="evidence" value="ECO:0007669"/>
    <property type="project" value="TreeGrafter"/>
</dbReference>
<dbReference type="GO" id="GO:0004372">
    <property type="term" value="F:glycine hydroxymethyltransferase activity"/>
    <property type="evidence" value="ECO:0007669"/>
    <property type="project" value="UniProtKB-UniRule"/>
</dbReference>
<dbReference type="GO" id="GO:0030170">
    <property type="term" value="F:pyridoxal phosphate binding"/>
    <property type="evidence" value="ECO:0007669"/>
    <property type="project" value="UniProtKB-UniRule"/>
</dbReference>
<dbReference type="GO" id="GO:0019264">
    <property type="term" value="P:glycine biosynthetic process from serine"/>
    <property type="evidence" value="ECO:0007669"/>
    <property type="project" value="UniProtKB-UniRule"/>
</dbReference>
<dbReference type="GO" id="GO:0035999">
    <property type="term" value="P:tetrahydrofolate interconversion"/>
    <property type="evidence" value="ECO:0007669"/>
    <property type="project" value="UniProtKB-UniRule"/>
</dbReference>
<dbReference type="CDD" id="cd00378">
    <property type="entry name" value="SHMT"/>
    <property type="match status" value="1"/>
</dbReference>
<dbReference type="FunFam" id="3.40.640.10:FF:000001">
    <property type="entry name" value="Serine hydroxymethyltransferase"/>
    <property type="match status" value="1"/>
</dbReference>
<dbReference type="FunFam" id="3.90.1150.10:FF:000003">
    <property type="entry name" value="Serine hydroxymethyltransferase"/>
    <property type="match status" value="1"/>
</dbReference>
<dbReference type="Gene3D" id="3.90.1150.10">
    <property type="entry name" value="Aspartate Aminotransferase, domain 1"/>
    <property type="match status" value="1"/>
</dbReference>
<dbReference type="Gene3D" id="3.40.640.10">
    <property type="entry name" value="Type I PLP-dependent aspartate aminotransferase-like (Major domain)"/>
    <property type="match status" value="1"/>
</dbReference>
<dbReference type="HAMAP" id="MF_00051">
    <property type="entry name" value="SHMT"/>
    <property type="match status" value="1"/>
</dbReference>
<dbReference type="InterPro" id="IPR015424">
    <property type="entry name" value="PyrdxlP-dep_Trfase"/>
</dbReference>
<dbReference type="InterPro" id="IPR015421">
    <property type="entry name" value="PyrdxlP-dep_Trfase_major"/>
</dbReference>
<dbReference type="InterPro" id="IPR015422">
    <property type="entry name" value="PyrdxlP-dep_Trfase_small"/>
</dbReference>
<dbReference type="InterPro" id="IPR001085">
    <property type="entry name" value="Ser_HO-MeTrfase"/>
</dbReference>
<dbReference type="InterPro" id="IPR049943">
    <property type="entry name" value="Ser_HO-MeTrfase-like"/>
</dbReference>
<dbReference type="InterPro" id="IPR019798">
    <property type="entry name" value="Ser_HO-MeTrfase_PLP_BS"/>
</dbReference>
<dbReference type="InterPro" id="IPR039429">
    <property type="entry name" value="SHMT-like_dom"/>
</dbReference>
<dbReference type="NCBIfam" id="NF000586">
    <property type="entry name" value="PRK00011.1"/>
    <property type="match status" value="1"/>
</dbReference>
<dbReference type="PANTHER" id="PTHR11680">
    <property type="entry name" value="SERINE HYDROXYMETHYLTRANSFERASE"/>
    <property type="match status" value="1"/>
</dbReference>
<dbReference type="PANTHER" id="PTHR11680:SF35">
    <property type="entry name" value="SERINE HYDROXYMETHYLTRANSFERASE 1"/>
    <property type="match status" value="1"/>
</dbReference>
<dbReference type="Pfam" id="PF00464">
    <property type="entry name" value="SHMT"/>
    <property type="match status" value="1"/>
</dbReference>
<dbReference type="PIRSF" id="PIRSF000412">
    <property type="entry name" value="SHMT"/>
    <property type="match status" value="1"/>
</dbReference>
<dbReference type="SUPFAM" id="SSF53383">
    <property type="entry name" value="PLP-dependent transferases"/>
    <property type="match status" value="1"/>
</dbReference>
<dbReference type="PROSITE" id="PS00096">
    <property type="entry name" value="SHMT"/>
    <property type="match status" value="1"/>
</dbReference>
<reference key="1">
    <citation type="journal article" date="2003" name="Proc. Natl. Acad. Sci. U.S.A.">
        <title>Genome sequence of the cyanobacterium Prochlorococcus marinus SS120, a nearly minimal oxyphototrophic genome.</title>
        <authorList>
            <person name="Dufresne A."/>
            <person name="Salanoubat M."/>
            <person name="Partensky F."/>
            <person name="Artiguenave F."/>
            <person name="Axmann I.M."/>
            <person name="Barbe V."/>
            <person name="Duprat S."/>
            <person name="Galperin M.Y."/>
            <person name="Koonin E.V."/>
            <person name="Le Gall F."/>
            <person name="Makarova K.S."/>
            <person name="Ostrowski M."/>
            <person name="Oztas S."/>
            <person name="Robert C."/>
            <person name="Rogozin I.B."/>
            <person name="Scanlan D.J."/>
            <person name="Tandeau de Marsac N."/>
            <person name="Weissenbach J."/>
            <person name="Wincker P."/>
            <person name="Wolf Y.I."/>
            <person name="Hess W.R."/>
        </authorList>
    </citation>
    <scope>NUCLEOTIDE SEQUENCE [LARGE SCALE GENOMIC DNA]</scope>
    <source>
        <strain>SARG / CCMP1375 / SS120</strain>
    </source>
</reference>
<accession>Q7VDS8</accession>
<organism>
    <name type="scientific">Prochlorococcus marinus (strain SARG / CCMP1375 / SS120)</name>
    <dbReference type="NCBI Taxonomy" id="167539"/>
    <lineage>
        <taxon>Bacteria</taxon>
        <taxon>Bacillati</taxon>
        <taxon>Cyanobacteriota</taxon>
        <taxon>Cyanophyceae</taxon>
        <taxon>Synechococcales</taxon>
        <taxon>Prochlorococcaceae</taxon>
        <taxon>Prochlorococcus</taxon>
    </lineage>
</organism>
<proteinExistence type="inferred from homology"/>
<protein>
    <recommendedName>
        <fullName evidence="1">Serine hydroxymethyltransferase</fullName>
        <shortName evidence="1">SHMT</shortName>
        <shortName evidence="1">Serine methylase</shortName>
        <ecNumber evidence="1">2.1.2.1</ecNumber>
    </recommendedName>
</protein>